<protein>
    <recommendedName>
        <fullName>Probable Xaa-Pro aminopeptidase CPSG_02684</fullName>
        <ecNumber>3.4.11.9</ecNumber>
    </recommendedName>
    <alternativeName>
        <fullName>Aminoacylproline aminopeptidase</fullName>
    </alternativeName>
    <alternativeName>
        <fullName>Prolidase</fullName>
    </alternativeName>
</protein>
<gene>
    <name type="ORF">CPSG_02684</name>
</gene>
<name>AMPP2_COCPS</name>
<reference key="1">
    <citation type="submission" date="2010-03" db="EMBL/GenBank/DDBJ databases">
        <title>The genome sequence of Coccidioides posadasii strain Silveira.</title>
        <authorList>
            <consortium name="The Broad Institute Genome Sequencing Center for Infectious Disease"/>
            <person name="Neafsey D."/>
            <person name="Orbach M."/>
            <person name="Henn M.R."/>
            <person name="Cole G.T."/>
            <person name="Galgiani J."/>
            <person name="Gardner M.J."/>
            <person name="Kirkland T.N."/>
            <person name="Taylor J.W."/>
            <person name="Young S.K."/>
            <person name="Zeng Q."/>
            <person name="Koehrsen M."/>
            <person name="Alvarado L."/>
            <person name="Berlin A."/>
            <person name="Borenstein D."/>
            <person name="Chapman S.B."/>
            <person name="Chen Z."/>
            <person name="Engels R."/>
            <person name="Freedman E."/>
            <person name="Gellesch M."/>
            <person name="Goldberg J."/>
            <person name="Griggs A."/>
            <person name="Gujja S."/>
            <person name="Heilman E."/>
            <person name="Heiman D."/>
            <person name="Howarth C."/>
            <person name="Jen D."/>
            <person name="Larson L."/>
            <person name="Mehta T."/>
            <person name="Neiman D."/>
            <person name="Park D."/>
            <person name="Pearson M."/>
            <person name="Richards J."/>
            <person name="Roberts A."/>
            <person name="Saif S."/>
            <person name="Shea T."/>
            <person name="Shenoy N."/>
            <person name="Sisk P."/>
            <person name="Stolte C."/>
            <person name="Sykes S."/>
            <person name="Walk T."/>
            <person name="White J."/>
            <person name="Yandava C."/>
            <person name="Haas B."/>
            <person name="Nusbaum C."/>
            <person name="Birren B."/>
        </authorList>
    </citation>
    <scope>NUCLEOTIDE SEQUENCE [LARGE SCALE GENOMIC DNA]</scope>
    <source>
        <strain>RMSCC 757 / Silveira</strain>
    </source>
</reference>
<dbReference type="EC" id="3.4.11.9"/>
<dbReference type="EMBL" id="GL636488">
    <property type="protein sequence ID" value="EFW20841.1"/>
    <property type="molecule type" value="Genomic_DNA"/>
</dbReference>
<dbReference type="SMR" id="E9CY14"/>
<dbReference type="STRING" id="443226.E9CY14"/>
<dbReference type="VEuPathDB" id="FungiDB:CPSG_02684"/>
<dbReference type="VEuPathDB" id="FungiDB:D8B26_002852"/>
<dbReference type="eggNOG" id="KOG2737">
    <property type="taxonomic scope" value="Eukaryota"/>
</dbReference>
<dbReference type="HOGENOM" id="CLU_017266_1_2_1"/>
<dbReference type="OMA" id="YELRMIR"/>
<dbReference type="OrthoDB" id="9302at33183"/>
<dbReference type="Proteomes" id="UP000002497">
    <property type="component" value="Unassembled WGS sequence"/>
</dbReference>
<dbReference type="GO" id="GO:0030145">
    <property type="term" value="F:manganese ion binding"/>
    <property type="evidence" value="ECO:0007669"/>
    <property type="project" value="InterPro"/>
</dbReference>
<dbReference type="GO" id="GO:0070006">
    <property type="term" value="F:metalloaminopeptidase activity"/>
    <property type="evidence" value="ECO:0007669"/>
    <property type="project" value="InterPro"/>
</dbReference>
<dbReference type="GO" id="GO:0006508">
    <property type="term" value="P:proteolysis"/>
    <property type="evidence" value="ECO:0007669"/>
    <property type="project" value="UniProtKB-KW"/>
</dbReference>
<dbReference type="CDD" id="cd01087">
    <property type="entry name" value="Prolidase"/>
    <property type="match status" value="1"/>
</dbReference>
<dbReference type="Gene3D" id="3.90.230.10">
    <property type="entry name" value="Creatinase/methionine aminopeptidase superfamily"/>
    <property type="match status" value="1"/>
</dbReference>
<dbReference type="Gene3D" id="3.40.350.10">
    <property type="entry name" value="Creatinase/prolidase N-terminal domain"/>
    <property type="match status" value="1"/>
</dbReference>
<dbReference type="InterPro" id="IPR007865">
    <property type="entry name" value="Aminopep_P_N"/>
</dbReference>
<dbReference type="InterPro" id="IPR029149">
    <property type="entry name" value="Creatin/AminoP/Spt16_N"/>
</dbReference>
<dbReference type="InterPro" id="IPR036005">
    <property type="entry name" value="Creatinase/aminopeptidase-like"/>
</dbReference>
<dbReference type="InterPro" id="IPR000994">
    <property type="entry name" value="Pept_M24"/>
</dbReference>
<dbReference type="InterPro" id="IPR001131">
    <property type="entry name" value="Peptidase_M24B_aminopep-P_CS"/>
</dbReference>
<dbReference type="InterPro" id="IPR052433">
    <property type="entry name" value="X-Pro_dipept-like"/>
</dbReference>
<dbReference type="PANTHER" id="PTHR43226">
    <property type="entry name" value="XAA-PRO AMINOPEPTIDASE 3"/>
    <property type="match status" value="1"/>
</dbReference>
<dbReference type="PANTHER" id="PTHR43226:SF3">
    <property type="entry name" value="XAA-PRO AMINOPEPTIDASE AN0832-RELATED"/>
    <property type="match status" value="1"/>
</dbReference>
<dbReference type="Pfam" id="PF05195">
    <property type="entry name" value="AMP_N"/>
    <property type="match status" value="1"/>
</dbReference>
<dbReference type="Pfam" id="PF00557">
    <property type="entry name" value="Peptidase_M24"/>
    <property type="match status" value="1"/>
</dbReference>
<dbReference type="SMART" id="SM01011">
    <property type="entry name" value="AMP_N"/>
    <property type="match status" value="1"/>
</dbReference>
<dbReference type="SUPFAM" id="SSF55920">
    <property type="entry name" value="Creatinase/aminopeptidase"/>
    <property type="match status" value="1"/>
</dbReference>
<dbReference type="SUPFAM" id="SSF53092">
    <property type="entry name" value="Creatinase/prolidase N-terminal domain"/>
    <property type="match status" value="1"/>
</dbReference>
<dbReference type="PROSITE" id="PS00491">
    <property type="entry name" value="PROLINE_PEPTIDASE"/>
    <property type="match status" value="1"/>
</dbReference>
<sequence>MAGSNTLSSSEHGDDPRGHSYSIHIQTRGTTLDKYPAKQHARNVARQLGLTDGLIYLMSQSTRTLEDSDQPQPFRQRRYFFYLSGVDEPDCHLTFDIKSDILTLYVPHYDLRKAIWVGPTLRPSEAMMRYDLNAAKTYDELSKNIRTWASKRMSPVIYILHEGQKPNINAHFLAFNHEDLLPAMDACREIKDEHEIDLIRRANEISASAHIEVLLGIRNMQNEAEIHGKFLDTCVSQGARNQSYEIIAASGENAAILHYTKNNEPLDDRQLVCLDAGAEWNCYASDVTRTFPRRPYWPSCESANIYSVVQRMQEECINGLKEGVRYLDLHILAHRIAIEELLSLGILKGGSTEEILQSGASLVFFPHGLGHHVGLEVHDVSPTPLMAFSLDKYKGLPLLSCRPPCTLSAPYLKAGMVVTVEPGIYFSRPALKDARRKPLSKYIDMDVVQKYIPVGGVRIEDDVLVTRDGFENLTKAPKGREMLKTIR</sequence>
<organism>
    <name type="scientific">Coccidioides posadasii (strain RMSCC 757 / Silveira)</name>
    <name type="common">Valley fever fungus</name>
    <dbReference type="NCBI Taxonomy" id="443226"/>
    <lineage>
        <taxon>Eukaryota</taxon>
        <taxon>Fungi</taxon>
        <taxon>Dikarya</taxon>
        <taxon>Ascomycota</taxon>
        <taxon>Pezizomycotina</taxon>
        <taxon>Eurotiomycetes</taxon>
        <taxon>Eurotiomycetidae</taxon>
        <taxon>Onygenales</taxon>
        <taxon>Onygenaceae</taxon>
        <taxon>Coccidioides</taxon>
    </lineage>
</organism>
<feature type="chain" id="PRO_0000411833" description="Probable Xaa-Pro aminopeptidase CPSG_02684">
    <location>
        <begin position="1"/>
        <end position="487"/>
    </location>
</feature>
<feature type="region of interest" description="Disordered" evidence="2">
    <location>
        <begin position="1"/>
        <end position="22"/>
    </location>
</feature>
<feature type="compositionally biased region" description="Polar residues" evidence="2">
    <location>
        <begin position="1"/>
        <end position="10"/>
    </location>
</feature>
<feature type="binding site" evidence="1">
    <location>
        <position position="275"/>
    </location>
    <ligand>
        <name>Mn(2+)</name>
        <dbReference type="ChEBI" id="CHEBI:29035"/>
        <label>2</label>
    </ligand>
</feature>
<feature type="binding site" evidence="1">
    <location>
        <position position="286"/>
    </location>
    <ligand>
        <name>Mn(2+)</name>
        <dbReference type="ChEBI" id="CHEBI:29035"/>
        <label>1</label>
    </ligand>
</feature>
<feature type="binding site" evidence="1">
    <location>
        <position position="286"/>
    </location>
    <ligand>
        <name>Mn(2+)</name>
        <dbReference type="ChEBI" id="CHEBI:29035"/>
        <label>2</label>
    </ligand>
</feature>
<feature type="binding site" evidence="1">
    <location>
        <position position="421"/>
    </location>
    <ligand>
        <name>Mn(2+)</name>
        <dbReference type="ChEBI" id="CHEBI:29035"/>
        <label>1</label>
    </ligand>
</feature>
<feature type="binding site" evidence="1">
    <location>
        <position position="460"/>
    </location>
    <ligand>
        <name>Mn(2+)</name>
        <dbReference type="ChEBI" id="CHEBI:29035"/>
        <label>1</label>
    </ligand>
</feature>
<feature type="binding site" evidence="1">
    <location>
        <position position="460"/>
    </location>
    <ligand>
        <name>Mn(2+)</name>
        <dbReference type="ChEBI" id="CHEBI:29035"/>
        <label>2</label>
    </ligand>
</feature>
<comment type="function">
    <text evidence="1">Catalyzes the removal of a penultimate prolyl residue from the N-termini of peptides.</text>
</comment>
<comment type="catalytic activity">
    <reaction>
        <text>Release of any N-terminal amino acid, including proline, that is linked to proline, even from a dipeptide or tripeptide.</text>
        <dbReference type="EC" id="3.4.11.9"/>
    </reaction>
</comment>
<comment type="cofactor">
    <cofactor evidence="1">
        <name>Mn(2+)</name>
        <dbReference type="ChEBI" id="CHEBI:29035"/>
    </cofactor>
    <text evidence="1">Binds 2 manganese ions per subunit.</text>
</comment>
<comment type="similarity">
    <text evidence="3">Belongs to the peptidase M24B family.</text>
</comment>
<accession>E9CY14</accession>
<proteinExistence type="inferred from homology"/>
<keyword id="KW-0031">Aminopeptidase</keyword>
<keyword id="KW-0378">Hydrolase</keyword>
<keyword id="KW-0464">Manganese</keyword>
<keyword id="KW-0479">Metal-binding</keyword>
<keyword id="KW-0482">Metalloprotease</keyword>
<keyword id="KW-0645">Protease</keyword>
<keyword id="KW-1185">Reference proteome</keyword>
<evidence type="ECO:0000250" key="1"/>
<evidence type="ECO:0000256" key="2">
    <source>
        <dbReference type="SAM" id="MobiDB-lite"/>
    </source>
</evidence>
<evidence type="ECO:0000305" key="3"/>